<evidence type="ECO:0000250" key="1"/>
<evidence type="ECO:0000250" key="2">
    <source>
        <dbReference type="UniProtKB" id="D3ZEF4"/>
    </source>
</evidence>
<evidence type="ECO:0000250" key="3">
    <source>
        <dbReference type="UniProtKB" id="Q14999"/>
    </source>
</evidence>
<evidence type="ECO:0000255" key="4"/>
<evidence type="ECO:0000255" key="5">
    <source>
        <dbReference type="PROSITE-ProRule" id="PRU00330"/>
    </source>
</evidence>
<evidence type="ECO:0000255" key="6">
    <source>
        <dbReference type="PROSITE-ProRule" id="PRU00614"/>
    </source>
</evidence>
<evidence type="ECO:0000256" key="7">
    <source>
        <dbReference type="SAM" id="MobiDB-lite"/>
    </source>
</evidence>
<evidence type="ECO:0000269" key="8">
    <source>
    </source>
</evidence>
<evidence type="ECO:0000269" key="9">
    <source>
    </source>
</evidence>
<evidence type="ECO:0000303" key="10">
    <source>
    </source>
</evidence>
<evidence type="ECO:0000305" key="11"/>
<dbReference type="EMBL" id="AK008655">
    <property type="protein sequence ID" value="BAB25811.1"/>
    <property type="molecule type" value="mRNA"/>
</dbReference>
<dbReference type="EMBL" id="AK147156">
    <property type="protein sequence ID" value="BAE27723.1"/>
    <property type="molecule type" value="mRNA"/>
</dbReference>
<dbReference type="EMBL" id="CT030702">
    <property type="status" value="NOT_ANNOTATED_CDS"/>
    <property type="molecule type" value="Genomic_DNA"/>
</dbReference>
<dbReference type="EMBL" id="BC019645">
    <property type="protein sequence ID" value="AAH19645.1"/>
    <property type="molecule type" value="mRNA"/>
</dbReference>
<dbReference type="EMBL" id="BC026946">
    <property type="protein sequence ID" value="AAH26946.2"/>
    <property type="molecule type" value="mRNA"/>
</dbReference>
<dbReference type="EMBL" id="BC059865">
    <property type="protein sequence ID" value="AAH59865.1"/>
    <property type="molecule type" value="mRNA"/>
</dbReference>
<dbReference type="EMBL" id="BC100544">
    <property type="protein sequence ID" value="AAI00545.1"/>
    <property type="molecule type" value="mRNA"/>
</dbReference>
<dbReference type="EMBL" id="AK172882">
    <property type="protein sequence ID" value="BAD32160.1"/>
    <property type="molecule type" value="mRNA"/>
</dbReference>
<dbReference type="CCDS" id="CCDS28833.1">
    <molecule id="Q8VE73-1"/>
</dbReference>
<dbReference type="RefSeq" id="NP_079887.3">
    <molecule id="Q8VE73-1"/>
    <property type="nucleotide sequence ID" value="NM_025611.5"/>
</dbReference>
<dbReference type="SMR" id="Q8VE73"/>
<dbReference type="BioGRID" id="211530">
    <property type="interactions" value="13"/>
</dbReference>
<dbReference type="CORUM" id="Q8VE73"/>
<dbReference type="FunCoup" id="Q8VE73">
    <property type="interactions" value="653"/>
</dbReference>
<dbReference type="STRING" id="10090.ENSMUSP00000049128"/>
<dbReference type="GlyGen" id="Q8VE73">
    <property type="glycosylation" value="1 site, 1 O-linked glycan (1 site)"/>
</dbReference>
<dbReference type="iPTMnet" id="Q8VE73"/>
<dbReference type="PhosphoSitePlus" id="Q8VE73"/>
<dbReference type="PaxDb" id="10090-ENSMUSP00000049128"/>
<dbReference type="ProteomicsDB" id="285435">
    <molecule id="Q8VE73-1"/>
</dbReference>
<dbReference type="ProteomicsDB" id="285436">
    <molecule id="Q8VE73-3"/>
</dbReference>
<dbReference type="Pumba" id="Q8VE73"/>
<dbReference type="Antibodypedia" id="4223">
    <property type="antibodies" value="199 antibodies from 37 providers"/>
</dbReference>
<dbReference type="DNASU" id="66515"/>
<dbReference type="Ensembl" id="ENSMUST00000043464.14">
    <molecule id="Q8VE73-1"/>
    <property type="protein sequence ID" value="ENSMUSP00000049128.8"/>
    <property type="gene ID" value="ENSMUSG00000038545.14"/>
</dbReference>
<dbReference type="GeneID" id="66515"/>
<dbReference type="KEGG" id="mmu:66515"/>
<dbReference type="UCSC" id="uc008ctp.1">
    <molecule id="Q8VE73-1"/>
    <property type="organism name" value="mouse"/>
</dbReference>
<dbReference type="AGR" id="MGI:1913765"/>
<dbReference type="CTD" id="9820"/>
<dbReference type="MGI" id="MGI:1913765">
    <property type="gene designation" value="Cul7"/>
</dbReference>
<dbReference type="VEuPathDB" id="HostDB:ENSMUSG00000038545"/>
<dbReference type="eggNOG" id="ENOG502RDJD">
    <property type="taxonomic scope" value="Eukaryota"/>
</dbReference>
<dbReference type="GeneTree" id="ENSGT00940000153954"/>
<dbReference type="HOGENOM" id="CLU_001067_1_0_1"/>
<dbReference type="InParanoid" id="Q8VE73"/>
<dbReference type="OMA" id="RCWPVAS"/>
<dbReference type="OrthoDB" id="9908599at2759"/>
<dbReference type="PhylomeDB" id="Q8VE73"/>
<dbReference type="TreeFam" id="TF101154"/>
<dbReference type="Reactome" id="R-MMU-983168">
    <property type="pathway name" value="Antigen processing: Ubiquitination &amp; Proteasome degradation"/>
</dbReference>
<dbReference type="UniPathway" id="UPA00143"/>
<dbReference type="BioGRID-ORCS" id="66515">
    <property type="hits" value="1 hit in 76 CRISPR screens"/>
</dbReference>
<dbReference type="ChiTaRS" id="Cul7">
    <property type="organism name" value="mouse"/>
</dbReference>
<dbReference type="PRO" id="PR:Q8VE73"/>
<dbReference type="Proteomes" id="UP000000589">
    <property type="component" value="Chromosome 17"/>
</dbReference>
<dbReference type="RNAct" id="Q8VE73">
    <property type="molecule type" value="protein"/>
</dbReference>
<dbReference type="Bgee" id="ENSMUSG00000038545">
    <property type="expression patterns" value="Expressed in saccule of membranous labyrinth and 246 other cell types or tissues"/>
</dbReference>
<dbReference type="ExpressionAtlas" id="Q8VE73">
    <property type="expression patterns" value="baseline and differential"/>
</dbReference>
<dbReference type="GO" id="GO:1990393">
    <property type="term" value="C:3M complex"/>
    <property type="evidence" value="ECO:0000250"/>
    <property type="project" value="UniProtKB"/>
</dbReference>
<dbReference type="GO" id="GO:0005813">
    <property type="term" value="C:centrosome"/>
    <property type="evidence" value="ECO:0000250"/>
    <property type="project" value="UniProtKB"/>
</dbReference>
<dbReference type="GO" id="GO:0031467">
    <property type="term" value="C:Cul7-RING ubiquitin ligase complex"/>
    <property type="evidence" value="ECO:0000314"/>
    <property type="project" value="UniProtKB"/>
</dbReference>
<dbReference type="GO" id="GO:0005737">
    <property type="term" value="C:cytoplasm"/>
    <property type="evidence" value="ECO:0000250"/>
    <property type="project" value="UniProtKB"/>
</dbReference>
<dbReference type="GO" id="GO:0005794">
    <property type="term" value="C:Golgi apparatus"/>
    <property type="evidence" value="ECO:0000250"/>
    <property type="project" value="UniProtKB"/>
</dbReference>
<dbReference type="GO" id="GO:0048471">
    <property type="term" value="C:perinuclear region of cytoplasm"/>
    <property type="evidence" value="ECO:0000250"/>
    <property type="project" value="UniProtKB"/>
</dbReference>
<dbReference type="GO" id="GO:0160072">
    <property type="term" value="F:ubiquitin ligase complex scaffold activity"/>
    <property type="evidence" value="ECO:0007669"/>
    <property type="project" value="Ensembl"/>
</dbReference>
<dbReference type="GO" id="GO:0031625">
    <property type="term" value="F:ubiquitin protein ligase binding"/>
    <property type="evidence" value="ECO:0007669"/>
    <property type="project" value="InterPro"/>
</dbReference>
<dbReference type="GO" id="GO:0001837">
    <property type="term" value="P:epithelial to mesenchymal transition"/>
    <property type="evidence" value="ECO:0000250"/>
    <property type="project" value="UniProtKB"/>
</dbReference>
<dbReference type="GO" id="GO:0007030">
    <property type="term" value="P:Golgi organization"/>
    <property type="evidence" value="ECO:0000250"/>
    <property type="project" value="UniProtKB"/>
</dbReference>
<dbReference type="GO" id="GO:0000226">
    <property type="term" value="P:microtubule cytoskeleton organization"/>
    <property type="evidence" value="ECO:0000250"/>
    <property type="project" value="UniProtKB"/>
</dbReference>
<dbReference type="GO" id="GO:0000281">
    <property type="term" value="P:mitotic cytokinesis"/>
    <property type="evidence" value="ECO:0000250"/>
    <property type="project" value="UniProtKB"/>
</dbReference>
<dbReference type="GO" id="GO:0046627">
    <property type="term" value="P:negative regulation of insulin receptor signaling pathway"/>
    <property type="evidence" value="ECO:0007669"/>
    <property type="project" value="Ensembl"/>
</dbReference>
<dbReference type="GO" id="GO:0001890">
    <property type="term" value="P:placenta development"/>
    <property type="evidence" value="ECO:0000250"/>
    <property type="project" value="UniProtKB"/>
</dbReference>
<dbReference type="GO" id="GO:0050775">
    <property type="term" value="P:positive regulation of dendrite morphogenesis"/>
    <property type="evidence" value="ECO:0000250"/>
    <property type="project" value="UniProtKB"/>
</dbReference>
<dbReference type="GO" id="GO:0016567">
    <property type="term" value="P:protein ubiquitination"/>
    <property type="evidence" value="ECO:0000250"/>
    <property type="project" value="UniProtKB"/>
</dbReference>
<dbReference type="GO" id="GO:0045601">
    <property type="term" value="P:regulation of endothelial cell differentiation"/>
    <property type="evidence" value="ECO:0000303"/>
    <property type="project" value="UniProtKB"/>
</dbReference>
<dbReference type="GO" id="GO:0007088">
    <property type="term" value="P:regulation of mitotic nuclear division"/>
    <property type="evidence" value="ECO:0000250"/>
    <property type="project" value="UniProtKB"/>
</dbReference>
<dbReference type="GO" id="GO:0006511">
    <property type="term" value="P:ubiquitin-dependent protein catabolic process"/>
    <property type="evidence" value="ECO:0007669"/>
    <property type="project" value="Ensembl"/>
</dbReference>
<dbReference type="GO" id="GO:0001570">
    <property type="term" value="P:vasculogenesis"/>
    <property type="evidence" value="ECO:0000315"/>
    <property type="project" value="UniProtKB"/>
</dbReference>
<dbReference type="Gene3D" id="2.30.30.30">
    <property type="match status" value="1"/>
</dbReference>
<dbReference type="Gene3D" id="1.20.1310.10">
    <property type="entry name" value="Cullin Repeats"/>
    <property type="match status" value="1"/>
</dbReference>
<dbReference type="Gene3D" id="3.30.230.130">
    <property type="entry name" value="Cullin, Chain C, Domain 2"/>
    <property type="match status" value="1"/>
</dbReference>
<dbReference type="Gene3D" id="2.60.120.260">
    <property type="entry name" value="Galactose-binding domain-like"/>
    <property type="match status" value="1"/>
</dbReference>
<dbReference type="Gene3D" id="1.10.10.10">
    <property type="entry name" value="Winged helix-like DNA-binding domain superfamily/Winged helix DNA-binding domain"/>
    <property type="match status" value="1"/>
</dbReference>
<dbReference type="InterPro" id="IPR004939">
    <property type="entry name" value="APC_su10/DOC_dom"/>
</dbReference>
<dbReference type="InterPro" id="IPR016024">
    <property type="entry name" value="ARM-type_fold"/>
</dbReference>
<dbReference type="InterPro" id="IPR056405">
    <property type="entry name" value="ARM_CUL7_CUL9"/>
</dbReference>
<dbReference type="InterPro" id="IPR021097">
    <property type="entry name" value="CPH_domain"/>
</dbReference>
<dbReference type="InterPro" id="IPR055486">
    <property type="entry name" value="CUL7/CUL9_N"/>
</dbReference>
<dbReference type="InterPro" id="IPR045093">
    <property type="entry name" value="Cullin"/>
</dbReference>
<dbReference type="InterPro" id="IPR016157">
    <property type="entry name" value="Cullin_CS"/>
</dbReference>
<dbReference type="InterPro" id="IPR016158">
    <property type="entry name" value="Cullin_homology"/>
</dbReference>
<dbReference type="InterPro" id="IPR036317">
    <property type="entry name" value="Cullin_homology_sf"/>
</dbReference>
<dbReference type="InterPro" id="IPR001373">
    <property type="entry name" value="Cullin_N"/>
</dbReference>
<dbReference type="InterPro" id="IPR019559">
    <property type="entry name" value="Cullin_neddylation_domain"/>
</dbReference>
<dbReference type="InterPro" id="IPR008979">
    <property type="entry name" value="Galactose-bd-like_sf"/>
</dbReference>
<dbReference type="InterPro" id="IPR014722">
    <property type="entry name" value="Rib_uL2_dom2"/>
</dbReference>
<dbReference type="InterPro" id="IPR036388">
    <property type="entry name" value="WH-like_DNA-bd_sf"/>
</dbReference>
<dbReference type="PANTHER" id="PTHR22771">
    <property type="entry name" value="CULLIN AND GALACTOSE-BINDING DOMAIN-CONTAINING"/>
    <property type="match status" value="1"/>
</dbReference>
<dbReference type="PANTHER" id="PTHR22771:SF3">
    <property type="entry name" value="CULLIN-7"/>
    <property type="match status" value="1"/>
</dbReference>
<dbReference type="Pfam" id="PF03256">
    <property type="entry name" value="ANAPC10"/>
    <property type="match status" value="1"/>
</dbReference>
<dbReference type="Pfam" id="PF24742">
    <property type="entry name" value="ARM_CUL7_CUL9"/>
    <property type="match status" value="1"/>
</dbReference>
<dbReference type="Pfam" id="PF11515">
    <property type="entry name" value="Cul7"/>
    <property type="match status" value="1"/>
</dbReference>
<dbReference type="Pfam" id="PF23168">
    <property type="entry name" value="CUL7_CUL9_N"/>
    <property type="match status" value="1"/>
</dbReference>
<dbReference type="Pfam" id="PF00888">
    <property type="entry name" value="Cullin"/>
    <property type="match status" value="1"/>
</dbReference>
<dbReference type="SMART" id="SM01337">
    <property type="entry name" value="APC10"/>
    <property type="match status" value="1"/>
</dbReference>
<dbReference type="SMART" id="SM00884">
    <property type="entry name" value="Cullin_Nedd8"/>
    <property type="match status" value="1"/>
</dbReference>
<dbReference type="SUPFAM" id="SSF48371">
    <property type="entry name" value="ARM repeat"/>
    <property type="match status" value="1"/>
</dbReference>
<dbReference type="SUPFAM" id="SSF75632">
    <property type="entry name" value="Cullin homology domain"/>
    <property type="match status" value="1"/>
</dbReference>
<dbReference type="SUPFAM" id="SSF49785">
    <property type="entry name" value="Galactose-binding domain-like"/>
    <property type="match status" value="1"/>
</dbReference>
<dbReference type="SUPFAM" id="SSF63748">
    <property type="entry name" value="Tudor/PWWP/MBT"/>
    <property type="match status" value="1"/>
</dbReference>
<dbReference type="PROSITE" id="PS01256">
    <property type="entry name" value="CULLIN_1"/>
    <property type="match status" value="1"/>
</dbReference>
<dbReference type="PROSITE" id="PS50069">
    <property type="entry name" value="CULLIN_2"/>
    <property type="match status" value="1"/>
</dbReference>
<dbReference type="PROSITE" id="PS51284">
    <property type="entry name" value="DOC"/>
    <property type="match status" value="1"/>
</dbReference>
<name>CUL7_MOUSE</name>
<gene>
    <name type="primary">Cul7</name>
    <name type="synonym">Kiaa0076</name>
</gene>
<proteinExistence type="evidence at protein level"/>
<sequence length="1689" mass="192292">MVGELRYREFRVPLGPGLHAYPDELIRQRVGHNGHPEYQIRWLILRRGDDGDRDSTVDCKAEHILLWMSDDEIYANCHKMLGENGQVIAPSRESTEAGALDKSVLGEMETDVKSLIQRALRQLEECVGTVPPAPLLHTVHVLSAYASIEPLTGIFKDRRVVNLLMHMLSSPDYQIRWSAGRMIQALSSHDAGTRTQILLSLSQQEAIEKHLDFDSRCALLALFAQATLTEHPMSFEGVQLPQVPGRLLFSLVKRYLHVTFLLDRLNGDAGDQGAQNNFIPEELNVGRGRLELEFSMAMGTLISELVQAMRWDGASSRPESSSSSTFQPRPAQFRPYTQRFRRSRRFRPRASFASFNTYALYVRDTLRPGMRVRMLENYEEIAAGDEGQFRQSNDGVPPAQVLWDSTGHTYWVHWHMLEILGFEEDIEDVIDIEELQELGANGALSIVPPSQRWKPITQLFAEPYVVPEEEDREESENLTQAEWWELLFFIRQLSEAERLHIVDLLQDHLEEERVLDYDMLPELTVPVDLAQDLLLSLPQQLEDSALRDLFSCSVYRKYGPEVLVGHLSYPFVPGAQPNLFGANEESEAKDPPLQSASPALQRLVESLGPEGEVLVELEQALGSEAPQETEVKSCLLQLQEQPQPFLALMRSLDTSASNKTLHLTVLRILMQLVNFPEALLLPWHEAMDACVTCLRSPNTDREVLQELIFFLHRLTTTSRDYAVILNQLGARDAISKVLEKHRGKLELAQELRDMVSKCEKHAHLYRKLTTNILGGCIQMVLGQIEDHRRTHRPIQIPFFDVFLRYLCQGSSEEMKKNRYWEKVEVSSNPQRASRLTDRNPKTYWESSGRAGSHFITLHMRPGVIIRQLTLLVAGEDSSYMPAWVVVCGGNSIKSVNKELNTVNVMPSASRVTLLENLTRFWPIIQIRIKRCQQGGINTRIRGLEVLGPKPTFWPVFREQLCRHTRLFYMVRAQAWSQDIAEDRRSLLHLSSRLNGALRHEQNFAERFLPDMEAAQALSKTCWEALVSPLVQNITSPDEDSTSSLGWLLDQYLGCREAAYNPQSRAAAFSSRVRRLTHLLVHVEPREAAPPVVAIPRSKGRNRIHDWSYLITRGLPSSIMKNLTRCWRSVVEEQMNKFLTASWKDDDFVPRYCERYYVLQKSSSELFGPRAAFLLAMRNGCADAVLRLPFLRAAHVSEQFARHIDQRIQGSRMGGARGMEMLAQLQRCLESVLIFSPLEIATTFEHYYQHYMADRLLSVGSSWLEGAVLEQIGPCFPSRLPQQMLQSLNVSEELQRQFHVYQLQQLDQELLKLEDTEKKIQVAHEDSGREDKSKKEEAIGEAAAVAMAEEEDQGKKEEGEEEGEGEDEEEERYYKGTMPEVCVLVVTPRFWPVASVCQMLNPATCLPAYLRGTINHYTNFYSKSQSRSSLEKEPQRRLQWTWQGRAEVQFGGQILHVSTVQMWLLLHLNNQKEVSVESLQAISELPPDVLHRAIGPLTSSRGPLDLQEQKNVPGGVLKIRDDSEEPRPRRGNVWLIPPQTYLQAEAEEGRNMEKRRNLLNCLVVRILKAHGDEGLHVDRLVYLVLEAWEKGPCPARGLVSSLGRGATCRSSDVLSCILHLLVKGTLRRHDDRPQVLYYAVPVTVMEPHMESLNPGSAGPNPPLTFHTLQIRSRGVPYASCTDNHTFSTFR</sequence>
<protein>
    <recommendedName>
        <fullName>Cullin-7</fullName>
        <shortName>CUL-7</shortName>
    </recommendedName>
    <alternativeName>
        <fullName>p185</fullName>
    </alternativeName>
    <alternativeName>
        <fullName>p193</fullName>
    </alternativeName>
</protein>
<accession>Q8VE73</accession>
<accession>Q3UHY3</accession>
<accession>Q497I2</accession>
<accession>Q6A0D6</accession>
<accession>Q6PB63</accession>
<accession>Q8R3W4</accession>
<accession>Q9CVD5</accession>
<feature type="chain" id="PRO_0000119803" description="Cullin-7">
    <location>
        <begin position="1"/>
        <end position="1689"/>
    </location>
</feature>
<feature type="domain" description="CPH" evidence="4">
    <location>
        <begin position="349"/>
        <end position="422"/>
    </location>
</feature>
<feature type="domain" description="DOC" evidence="6">
    <location>
        <begin position="793"/>
        <end position="972"/>
    </location>
</feature>
<feature type="region of interest" description="Disordered" evidence="7">
    <location>
        <begin position="1321"/>
        <end position="1371"/>
    </location>
</feature>
<feature type="compositionally biased region" description="Basic and acidic residues" evidence="7">
    <location>
        <begin position="1321"/>
        <end position="1337"/>
    </location>
</feature>
<feature type="compositionally biased region" description="Acidic residues" evidence="7">
    <location>
        <begin position="1358"/>
        <end position="1370"/>
    </location>
</feature>
<feature type="cross-link" description="Glycyl lysine isopeptide (Lys-Gly) (interchain with G-Cter in NEDD8)" evidence="4">
    <location>
        <position position="1567"/>
    </location>
</feature>
<feature type="splice variant" id="VSP_038331" description="In isoform 2." evidence="10">
    <location>
        <position position="1472"/>
    </location>
</feature>
<feature type="sequence conflict" description="In Ref. 1; BAE27723." evidence="11" ref="1">
    <original>G</original>
    <variation>V</variation>
    <location>
        <position position="395"/>
    </location>
</feature>
<feature type="sequence conflict" description="In Ref. 4; BAD32160." evidence="11" ref="4">
    <original>D</original>
    <variation>E</variation>
    <location>
        <position position="518"/>
    </location>
</feature>
<feature type="sequence conflict" description="In Ref. 3; AAH19645." evidence="11" ref="3">
    <original>IQM</original>
    <variation>DAW</variation>
    <location>
        <begin position="777"/>
        <end position="779"/>
    </location>
</feature>
<feature type="sequence conflict" description="In Ref. 3; AAH59865." evidence="11" ref="3">
    <location>
        <begin position="855"/>
        <end position="922"/>
    </location>
</feature>
<feature type="sequence conflict" description="In Ref. 1; BAE27723." evidence="11" ref="1">
    <original>G</original>
    <variation>R</variation>
    <location>
        <position position="888"/>
    </location>
</feature>
<feature type="sequence conflict" description="In Ref. 3; AAH59865." evidence="11" ref="3">
    <original>Q</original>
    <variation>E</variation>
    <location>
        <position position="959"/>
    </location>
</feature>
<feature type="sequence conflict" description="In Ref. 1; BAB25811." evidence="11" ref="1">
    <original>S</original>
    <variation>L</variation>
    <location>
        <position position="1482"/>
    </location>
</feature>
<feature type="sequence conflict" description="In Ref. 1; BAB25811." evidence="11" ref="1">
    <original>P</original>
    <variation>L</variation>
    <location>
        <position position="1495"/>
    </location>
</feature>
<organism>
    <name type="scientific">Mus musculus</name>
    <name type="common">Mouse</name>
    <dbReference type="NCBI Taxonomy" id="10090"/>
    <lineage>
        <taxon>Eukaryota</taxon>
        <taxon>Metazoa</taxon>
        <taxon>Chordata</taxon>
        <taxon>Craniata</taxon>
        <taxon>Vertebrata</taxon>
        <taxon>Euteleostomi</taxon>
        <taxon>Mammalia</taxon>
        <taxon>Eutheria</taxon>
        <taxon>Euarchontoglires</taxon>
        <taxon>Glires</taxon>
        <taxon>Rodentia</taxon>
        <taxon>Myomorpha</taxon>
        <taxon>Muroidea</taxon>
        <taxon>Muridae</taxon>
        <taxon>Murinae</taxon>
        <taxon>Mus</taxon>
        <taxon>Mus</taxon>
    </lineage>
</organism>
<comment type="function">
    <text evidence="2 3 8">Core component of the 3M and Cul7-RING(FBXW8) complexes, which mediate the ubiquitination and subsequent proteasomal degradation of target proteins (By similarity). Core component of the 3M complex, a complex required to regulate microtubule dynamics and genome integrity (By similarity). It is unclear how the 3M complex regulates microtubules, it could act by controlling the level of a microtubule stabilizer (By similarity). The Cul7-RING(FBXW8) complex alone lacks ubiquitination activity and does not promote polyubiquitination and proteasomal degradation of p53/TP53 (By similarity). However it mediates recruitment of p53/TP53 for ubiquitination by neddylated CUL1-RBX1 (By similarity). Interaction with CUL9 is required to inhibit CUL9 activity and ubiquitination of BIRC5 (By similarity). The Cul7-RING(FBXW8) complex also mediates ubiquitination and consequent degradation of target proteins such as GORASP1, IRS1 and MAP4K1/HPK1 (By similarity). Ubiquitination of GORASP1 regulates Golgi morphogenesis and dendrite patterning in brain (By similarity). Mediates ubiquitination and degradation of IRS1 in a mTOR-dependent manner: the Cul7-RING(FBXW8) complex recognizes and binds IRS1 previously phosphorylated by S6 kinase (RPS6KB1 or RPS6KB2) (By similarity). The Cul7-RING(FBXW8) complex also mediates ubiquitination of MAP4K1/HPK1: recognizes and binds autophosphorylated MAP4K1/HPK1, leading to its degradation, thereby affecting cell proliferation and differentiation (By similarity). Acts as a regulator in trophoblast cell epithelial-mesenchymal transition and placental development (By similarity). While the Cul7-RING(FBXW8) and the 3M complexes are associated and involved in common processes, CUL7 and the Cul7-RING(FBXW8) complex may have additional functions (By similarity). Probably plays a role in the degradation of proteins involved in endothelial proliferation and/or differentiation (PubMed:12904573).</text>
</comment>
<comment type="pathway">
    <text>Protein modification; protein ubiquitination.</text>
</comment>
<comment type="subunit">
    <text evidence="3 9">Component of the 3M complex, composed of core components CUL7, CCDC8 and OBSL1 (By similarity). Component of the Cul7-RING(FBXW8) complex consisting of CUL7, RBX1, SKP1 and FBXW8 (By similarity). Within the Cul7-RING(FBXW8) complex interacts with FBXW8 and RBX1, but not with SKP1 (By similarity) (PubMed:16880526). Interacts with CUL1 (via the C-terminal domain); the interaction seems to be mediated by FBXW8; it is likely specific to FBXW8, but not other F-box proteins (By similarity) (PubMed:16880526). Interacts (via the CPH domain) with p53/TP53; the interaction preferentially involves tetrameric and dimeric p53/TP53; this interaction recruits p53/TP53 for ubiquitination by neddylated CUL1-RBX1 (By similarity). The CUL7-CUL9 heterodimer seems to interact specifically with p53/TP53 (By similarity). Interacts with FBXW8; interaction is mutually exclusive of binding to CUL9 or p53/TP53 (By similarity). Interacts with CUL9; leading to inhibited CUL9 activity (By similarity). Interacts with OBSL1 (By similarity). Interacts (as part of the 3M complex) with HDAC4 and HDAC5; it is negatively regulated by ANKRA2 (By similarity).</text>
</comment>
<comment type="subcellular location">
    <subcellularLocation>
        <location evidence="1">Cytoplasm</location>
    </subcellularLocation>
    <subcellularLocation>
        <location evidence="1">Cytoplasm</location>
        <location evidence="1">Cytoskeleton</location>
        <location evidence="1">Microtubule organizing center</location>
        <location evidence="1">Centrosome</location>
    </subcellularLocation>
    <subcellularLocation>
        <location evidence="1">Cytoplasm</location>
        <location evidence="1">Perinuclear region</location>
    </subcellularLocation>
    <subcellularLocation>
        <location evidence="1">Golgi apparatus</location>
    </subcellularLocation>
    <text evidence="1">Colocalizes with FBXW8 at the Golgi apparatus in neurons; localization to Golgi is mediated by OBSL1. During mitosis, localizes to the mitotic apparatus. CCDC8 is required for centrosomal location (By similarity).</text>
</comment>
<comment type="alternative products">
    <event type="alternative splicing"/>
    <isoform>
        <id>Q8VE73-1</id>
        <name>1</name>
        <sequence type="displayed"/>
    </isoform>
    <isoform>
        <id>Q8VE73-3</id>
        <name>2</name>
        <sequence type="described" ref="VSP_038331"/>
    </isoform>
</comment>
<comment type="domain">
    <text evidence="3">The CPH domain is essential for interaction with p53/TP53.</text>
</comment>
<comment type="disruption phenotype">
    <text evidence="8">Mice are neonatal lethal and show vascular defects in both the embryo and the placenta.</text>
</comment>
<comment type="similarity">
    <text evidence="5">Belongs to the cullin family.</text>
</comment>
<reference key="1">
    <citation type="journal article" date="2005" name="Science">
        <title>The transcriptional landscape of the mammalian genome.</title>
        <authorList>
            <person name="Carninci P."/>
            <person name="Kasukawa T."/>
            <person name="Katayama S."/>
            <person name="Gough J."/>
            <person name="Frith M.C."/>
            <person name="Maeda N."/>
            <person name="Oyama R."/>
            <person name="Ravasi T."/>
            <person name="Lenhard B."/>
            <person name="Wells C."/>
            <person name="Kodzius R."/>
            <person name="Shimokawa K."/>
            <person name="Bajic V.B."/>
            <person name="Brenner S.E."/>
            <person name="Batalov S."/>
            <person name="Forrest A.R."/>
            <person name="Zavolan M."/>
            <person name="Davis M.J."/>
            <person name="Wilming L.G."/>
            <person name="Aidinis V."/>
            <person name="Allen J.E."/>
            <person name="Ambesi-Impiombato A."/>
            <person name="Apweiler R."/>
            <person name="Aturaliya R.N."/>
            <person name="Bailey T.L."/>
            <person name="Bansal M."/>
            <person name="Baxter L."/>
            <person name="Beisel K.W."/>
            <person name="Bersano T."/>
            <person name="Bono H."/>
            <person name="Chalk A.M."/>
            <person name="Chiu K.P."/>
            <person name="Choudhary V."/>
            <person name="Christoffels A."/>
            <person name="Clutterbuck D.R."/>
            <person name="Crowe M.L."/>
            <person name="Dalla E."/>
            <person name="Dalrymple B.P."/>
            <person name="de Bono B."/>
            <person name="Della Gatta G."/>
            <person name="di Bernardo D."/>
            <person name="Down T."/>
            <person name="Engstrom P."/>
            <person name="Fagiolini M."/>
            <person name="Faulkner G."/>
            <person name="Fletcher C.F."/>
            <person name="Fukushima T."/>
            <person name="Furuno M."/>
            <person name="Futaki S."/>
            <person name="Gariboldi M."/>
            <person name="Georgii-Hemming P."/>
            <person name="Gingeras T.R."/>
            <person name="Gojobori T."/>
            <person name="Green R.E."/>
            <person name="Gustincich S."/>
            <person name="Harbers M."/>
            <person name="Hayashi Y."/>
            <person name="Hensch T.K."/>
            <person name="Hirokawa N."/>
            <person name="Hill D."/>
            <person name="Huminiecki L."/>
            <person name="Iacono M."/>
            <person name="Ikeo K."/>
            <person name="Iwama A."/>
            <person name="Ishikawa T."/>
            <person name="Jakt M."/>
            <person name="Kanapin A."/>
            <person name="Katoh M."/>
            <person name="Kawasawa Y."/>
            <person name="Kelso J."/>
            <person name="Kitamura H."/>
            <person name="Kitano H."/>
            <person name="Kollias G."/>
            <person name="Krishnan S.P."/>
            <person name="Kruger A."/>
            <person name="Kummerfeld S.K."/>
            <person name="Kurochkin I.V."/>
            <person name="Lareau L.F."/>
            <person name="Lazarevic D."/>
            <person name="Lipovich L."/>
            <person name="Liu J."/>
            <person name="Liuni S."/>
            <person name="McWilliam S."/>
            <person name="Madan Babu M."/>
            <person name="Madera M."/>
            <person name="Marchionni L."/>
            <person name="Matsuda H."/>
            <person name="Matsuzawa S."/>
            <person name="Miki H."/>
            <person name="Mignone F."/>
            <person name="Miyake S."/>
            <person name="Morris K."/>
            <person name="Mottagui-Tabar S."/>
            <person name="Mulder N."/>
            <person name="Nakano N."/>
            <person name="Nakauchi H."/>
            <person name="Ng P."/>
            <person name="Nilsson R."/>
            <person name="Nishiguchi S."/>
            <person name="Nishikawa S."/>
            <person name="Nori F."/>
            <person name="Ohara O."/>
            <person name="Okazaki Y."/>
            <person name="Orlando V."/>
            <person name="Pang K.C."/>
            <person name="Pavan W.J."/>
            <person name="Pavesi G."/>
            <person name="Pesole G."/>
            <person name="Petrovsky N."/>
            <person name="Piazza S."/>
            <person name="Reed J."/>
            <person name="Reid J.F."/>
            <person name="Ring B.Z."/>
            <person name="Ringwald M."/>
            <person name="Rost B."/>
            <person name="Ruan Y."/>
            <person name="Salzberg S.L."/>
            <person name="Sandelin A."/>
            <person name="Schneider C."/>
            <person name="Schoenbach C."/>
            <person name="Sekiguchi K."/>
            <person name="Semple C.A."/>
            <person name="Seno S."/>
            <person name="Sessa L."/>
            <person name="Sheng Y."/>
            <person name="Shibata Y."/>
            <person name="Shimada H."/>
            <person name="Shimada K."/>
            <person name="Silva D."/>
            <person name="Sinclair B."/>
            <person name="Sperling S."/>
            <person name="Stupka E."/>
            <person name="Sugiura K."/>
            <person name="Sultana R."/>
            <person name="Takenaka Y."/>
            <person name="Taki K."/>
            <person name="Tammoja K."/>
            <person name="Tan S.L."/>
            <person name="Tang S."/>
            <person name="Taylor M.S."/>
            <person name="Tegner J."/>
            <person name="Teichmann S.A."/>
            <person name="Ueda H.R."/>
            <person name="van Nimwegen E."/>
            <person name="Verardo R."/>
            <person name="Wei C.L."/>
            <person name="Yagi K."/>
            <person name="Yamanishi H."/>
            <person name="Zabarovsky E."/>
            <person name="Zhu S."/>
            <person name="Zimmer A."/>
            <person name="Hide W."/>
            <person name="Bult C."/>
            <person name="Grimmond S.M."/>
            <person name="Teasdale R.D."/>
            <person name="Liu E.T."/>
            <person name="Brusic V."/>
            <person name="Quackenbush J."/>
            <person name="Wahlestedt C."/>
            <person name="Mattick J.S."/>
            <person name="Hume D.A."/>
            <person name="Kai C."/>
            <person name="Sasaki D."/>
            <person name="Tomaru Y."/>
            <person name="Fukuda S."/>
            <person name="Kanamori-Katayama M."/>
            <person name="Suzuki M."/>
            <person name="Aoki J."/>
            <person name="Arakawa T."/>
            <person name="Iida J."/>
            <person name="Imamura K."/>
            <person name="Itoh M."/>
            <person name="Kato T."/>
            <person name="Kawaji H."/>
            <person name="Kawagashira N."/>
            <person name="Kawashima T."/>
            <person name="Kojima M."/>
            <person name="Kondo S."/>
            <person name="Konno H."/>
            <person name="Nakano K."/>
            <person name="Ninomiya N."/>
            <person name="Nishio T."/>
            <person name="Okada M."/>
            <person name="Plessy C."/>
            <person name="Shibata K."/>
            <person name="Shiraki T."/>
            <person name="Suzuki S."/>
            <person name="Tagami M."/>
            <person name="Waki K."/>
            <person name="Watahiki A."/>
            <person name="Okamura-Oho Y."/>
            <person name="Suzuki H."/>
            <person name="Kawai J."/>
            <person name="Hayashizaki Y."/>
        </authorList>
    </citation>
    <scope>NUCLEOTIDE SEQUENCE [LARGE SCALE MRNA] (ISOFORM 1)</scope>
    <source>
        <strain>C57BL/6J</strain>
        <tissue>Stomach</tissue>
    </source>
</reference>
<reference key="2">
    <citation type="journal article" date="2009" name="PLoS Biol.">
        <title>Lineage-specific biology revealed by a finished genome assembly of the mouse.</title>
        <authorList>
            <person name="Church D.M."/>
            <person name="Goodstadt L."/>
            <person name="Hillier L.W."/>
            <person name="Zody M.C."/>
            <person name="Goldstein S."/>
            <person name="She X."/>
            <person name="Bult C.J."/>
            <person name="Agarwala R."/>
            <person name="Cherry J.L."/>
            <person name="DiCuccio M."/>
            <person name="Hlavina W."/>
            <person name="Kapustin Y."/>
            <person name="Meric P."/>
            <person name="Maglott D."/>
            <person name="Birtle Z."/>
            <person name="Marques A.C."/>
            <person name="Graves T."/>
            <person name="Zhou S."/>
            <person name="Teague B."/>
            <person name="Potamousis K."/>
            <person name="Churas C."/>
            <person name="Place M."/>
            <person name="Herschleb J."/>
            <person name="Runnheim R."/>
            <person name="Forrest D."/>
            <person name="Amos-Landgraf J."/>
            <person name="Schwartz D.C."/>
            <person name="Cheng Z."/>
            <person name="Lindblad-Toh K."/>
            <person name="Eichler E.E."/>
            <person name="Ponting C.P."/>
        </authorList>
    </citation>
    <scope>NUCLEOTIDE SEQUENCE [LARGE SCALE GENOMIC DNA]</scope>
    <source>
        <strain>C57BL/6J</strain>
    </source>
</reference>
<reference key="3">
    <citation type="journal article" date="2004" name="Genome Res.">
        <title>The status, quality, and expansion of the NIH full-length cDNA project: the Mammalian Gene Collection (MGC).</title>
        <authorList>
            <consortium name="The MGC Project Team"/>
        </authorList>
    </citation>
    <scope>NUCLEOTIDE SEQUENCE [LARGE SCALE MRNA] OF 299-1689 (ISOFORM 2)</scope>
    <scope>NUCLEOTIDE SEQUENCE [LARGE SCALE MRNA] OF 777-1689 (ISOFORM 1)</scope>
    <source>
        <strain>C57BL/6J</strain>
        <strain>Czech II</strain>
        <tissue>Brain</tissue>
        <tissue>Jaw</tissue>
        <tissue>Limb</tissue>
        <tissue>Mammary gland</tissue>
    </source>
</reference>
<reference key="4">
    <citation type="journal article" date="2004" name="DNA Res.">
        <title>Prediction of the coding sequences of mouse homologues of KIAA gene: IV. The complete nucleotide sequences of 500 mouse KIAA-homologous cDNAs identified by screening of terminal sequences of cDNA clones randomly sampled from size-fractionated libraries.</title>
        <authorList>
            <person name="Okazaki N."/>
            <person name="Kikuno R."/>
            <person name="Ohara R."/>
            <person name="Inamoto S."/>
            <person name="Koseki H."/>
            <person name="Hiraoka S."/>
            <person name="Saga Y."/>
            <person name="Seino S."/>
            <person name="Nishimura M."/>
            <person name="Kaisho T."/>
            <person name="Hoshino K."/>
            <person name="Kitamura H."/>
            <person name="Nagase T."/>
            <person name="Ohara O."/>
            <person name="Koga H."/>
        </authorList>
    </citation>
    <scope>NUCLEOTIDE SEQUENCE [LARGE SCALE MRNA] OF 182-1689 (ISOFORM 1)</scope>
    <source>
        <tissue>Fetal brain</tissue>
    </source>
</reference>
<reference key="5">
    <citation type="journal article" date="2003" name="Proc. Natl. Acad. Sci. U.S.A.">
        <title>Targeted disruption of p185/Cul7 gene results in abnormal vascular morphogenesis.</title>
        <authorList>
            <person name="Arai T."/>
            <person name="Kasper J.S."/>
            <person name="Skaar J.R."/>
            <person name="Ali S.H."/>
            <person name="Takahashi C."/>
            <person name="DeCaprio J.A."/>
        </authorList>
    </citation>
    <scope>FUNCTION</scope>
    <scope>DISRUPTION PHENOTYPE</scope>
</reference>
<reference key="6">
    <citation type="journal article" date="2006" name="Mol. Cell. Biol.">
        <title>Fbxw8 is essential for Cul1-Cul7 complex formation and for placental development.</title>
        <authorList>
            <person name="Tsunematsu R."/>
            <person name="Nishiyama M."/>
            <person name="Kotoshiba S."/>
            <person name="Saiga T."/>
            <person name="Kamura T."/>
            <person name="Nakayama K.I."/>
        </authorList>
    </citation>
    <scope>INTERACTION WITH CUL1 AND FBXW8</scope>
</reference>
<reference key="7">
    <citation type="journal article" date="2010" name="Cell">
        <title>A tissue-specific atlas of mouse protein phosphorylation and expression.</title>
        <authorList>
            <person name="Huttlin E.L."/>
            <person name="Jedrychowski M.P."/>
            <person name="Elias J.E."/>
            <person name="Goswami T."/>
            <person name="Rad R."/>
            <person name="Beausoleil S.A."/>
            <person name="Villen J."/>
            <person name="Haas W."/>
            <person name="Sowa M.E."/>
            <person name="Gygi S.P."/>
        </authorList>
    </citation>
    <scope>IDENTIFICATION BY MASS SPECTROMETRY [LARGE SCALE ANALYSIS]</scope>
    <source>
        <tissue>Pancreas</tissue>
        <tissue>Testis</tissue>
    </source>
</reference>
<keyword id="KW-0025">Alternative splicing</keyword>
<keyword id="KW-0963">Cytoplasm</keyword>
<keyword id="KW-0206">Cytoskeleton</keyword>
<keyword id="KW-0333">Golgi apparatus</keyword>
<keyword id="KW-1017">Isopeptide bond</keyword>
<keyword id="KW-1185">Reference proteome</keyword>
<keyword id="KW-0832">Ubl conjugation</keyword>
<keyword id="KW-0833">Ubl conjugation pathway</keyword>